<comment type="function">
    <text evidence="1">This protein is one of the early assembly proteins of the 50S ribosomal subunit, although it is not seen to bind rRNA by itself. It is important during the early stages of 50S assembly.</text>
</comment>
<comment type="subunit">
    <text evidence="1">Part of the 50S ribosomal subunit.</text>
</comment>
<comment type="similarity">
    <text evidence="1">Belongs to the universal ribosomal protein uL13 family.</text>
</comment>
<name>RL13_SACS2</name>
<dbReference type="EMBL" id="Y08257">
    <property type="protein sequence ID" value="CAA69533.1"/>
    <property type="molecule type" value="Genomic_DNA"/>
</dbReference>
<dbReference type="EMBL" id="AE006641">
    <property type="protein sequence ID" value="AAK40431.1"/>
    <property type="molecule type" value="Genomic_DNA"/>
</dbReference>
<dbReference type="PIR" id="S75419">
    <property type="entry name" value="S75419"/>
</dbReference>
<dbReference type="RefSeq" id="WP_009988879.1">
    <property type="nucleotide sequence ID" value="NC_002754.1"/>
</dbReference>
<dbReference type="SMR" id="P95991"/>
<dbReference type="FunCoup" id="P95991">
    <property type="interactions" value="181"/>
</dbReference>
<dbReference type="STRING" id="273057.SSO0069"/>
<dbReference type="PaxDb" id="273057-SSO0069"/>
<dbReference type="EnsemblBacteria" id="AAK40431">
    <property type="protein sequence ID" value="AAK40431"/>
    <property type="gene ID" value="SSO0069"/>
</dbReference>
<dbReference type="KEGG" id="sso:SSO0069"/>
<dbReference type="PATRIC" id="fig|273057.12.peg.70"/>
<dbReference type="eggNOG" id="arCOG04242">
    <property type="taxonomic scope" value="Archaea"/>
</dbReference>
<dbReference type="HOGENOM" id="CLU_076922_1_0_2"/>
<dbReference type="InParanoid" id="P95991"/>
<dbReference type="PhylomeDB" id="P95991"/>
<dbReference type="Proteomes" id="UP000001974">
    <property type="component" value="Chromosome"/>
</dbReference>
<dbReference type="GO" id="GO:0022625">
    <property type="term" value="C:cytosolic large ribosomal subunit"/>
    <property type="evidence" value="ECO:0000318"/>
    <property type="project" value="GO_Central"/>
</dbReference>
<dbReference type="GO" id="GO:0005840">
    <property type="term" value="C:ribosome"/>
    <property type="evidence" value="ECO:0000318"/>
    <property type="project" value="GO_Central"/>
</dbReference>
<dbReference type="GO" id="GO:0003729">
    <property type="term" value="F:mRNA binding"/>
    <property type="evidence" value="ECO:0000318"/>
    <property type="project" value="GO_Central"/>
</dbReference>
<dbReference type="GO" id="GO:0003735">
    <property type="term" value="F:structural constituent of ribosome"/>
    <property type="evidence" value="ECO:0000318"/>
    <property type="project" value="GO_Central"/>
</dbReference>
<dbReference type="GO" id="GO:0017148">
    <property type="term" value="P:negative regulation of translation"/>
    <property type="evidence" value="ECO:0000318"/>
    <property type="project" value="GO_Central"/>
</dbReference>
<dbReference type="GO" id="GO:0006412">
    <property type="term" value="P:translation"/>
    <property type="evidence" value="ECO:0007669"/>
    <property type="project" value="UniProtKB-UniRule"/>
</dbReference>
<dbReference type="CDD" id="cd00392">
    <property type="entry name" value="Ribosomal_L13"/>
    <property type="match status" value="1"/>
</dbReference>
<dbReference type="Gene3D" id="3.90.1180.10">
    <property type="entry name" value="Ribosomal protein L13"/>
    <property type="match status" value="1"/>
</dbReference>
<dbReference type="HAMAP" id="MF_01366">
    <property type="entry name" value="Ribosomal_uL13"/>
    <property type="match status" value="1"/>
</dbReference>
<dbReference type="InterPro" id="IPR005822">
    <property type="entry name" value="Ribosomal_uL13"/>
</dbReference>
<dbReference type="InterPro" id="IPR005823">
    <property type="entry name" value="Ribosomal_uL13_bac-type"/>
</dbReference>
<dbReference type="InterPro" id="IPR023563">
    <property type="entry name" value="Ribosomal_uL13_CS"/>
</dbReference>
<dbReference type="InterPro" id="IPR005755">
    <property type="entry name" value="Ribosomal_uL13_euk/arc"/>
</dbReference>
<dbReference type="InterPro" id="IPR036899">
    <property type="entry name" value="Ribosomal_uL13_sf"/>
</dbReference>
<dbReference type="NCBIfam" id="TIGR01077">
    <property type="entry name" value="L13_A_E"/>
    <property type="match status" value="1"/>
</dbReference>
<dbReference type="NCBIfam" id="NF005004">
    <property type="entry name" value="PRK06394.1"/>
    <property type="match status" value="1"/>
</dbReference>
<dbReference type="PANTHER" id="PTHR11545:SF3">
    <property type="entry name" value="LARGE RIBOSOMAL SUBUNIT PROTEIN UL13"/>
    <property type="match status" value="1"/>
</dbReference>
<dbReference type="PANTHER" id="PTHR11545">
    <property type="entry name" value="RIBOSOMAL PROTEIN L13"/>
    <property type="match status" value="1"/>
</dbReference>
<dbReference type="Pfam" id="PF00572">
    <property type="entry name" value="Ribosomal_L13"/>
    <property type="match status" value="1"/>
</dbReference>
<dbReference type="PIRSF" id="PIRSF002181">
    <property type="entry name" value="Ribosomal_L13"/>
    <property type="match status" value="1"/>
</dbReference>
<dbReference type="SUPFAM" id="SSF52161">
    <property type="entry name" value="Ribosomal protein L13"/>
    <property type="match status" value="1"/>
</dbReference>
<dbReference type="PROSITE" id="PS00783">
    <property type="entry name" value="RIBOSOMAL_L13"/>
    <property type="match status" value="1"/>
</dbReference>
<accession>P95991</accession>
<keyword id="KW-1185">Reference proteome</keyword>
<keyword id="KW-0687">Ribonucleoprotein</keyword>
<keyword id="KW-0689">Ribosomal protein</keyword>
<organism>
    <name type="scientific">Saccharolobus solfataricus (strain ATCC 35092 / DSM 1617 / JCM 11322 / P2)</name>
    <name type="common">Sulfolobus solfataricus</name>
    <dbReference type="NCBI Taxonomy" id="273057"/>
    <lineage>
        <taxon>Archaea</taxon>
        <taxon>Thermoproteota</taxon>
        <taxon>Thermoprotei</taxon>
        <taxon>Sulfolobales</taxon>
        <taxon>Sulfolobaceae</taxon>
        <taxon>Saccharolobus</taxon>
    </lineage>
</organism>
<feature type="chain" id="PRO_0000133765" description="Large ribosomal subunit protein uL13">
    <location>
        <begin position="1"/>
        <end position="149"/>
    </location>
</feature>
<protein>
    <recommendedName>
        <fullName evidence="1">Large ribosomal subunit protein uL13</fullName>
    </recommendedName>
    <alternativeName>
        <fullName evidence="2">50S ribosomal protein L13</fullName>
    </alternativeName>
</protein>
<proteinExistence type="inferred from homology"/>
<reference key="1">
    <citation type="journal article" date="1996" name="Mol. Microbiol.">
        <title>Organizational characteristics and information content of an archaeal genome: 156 kb of sequence from Sulfolobus solfataricus P2.</title>
        <authorList>
            <person name="Sensen C.W."/>
            <person name="Klenk H.-P."/>
            <person name="Singh R.K."/>
            <person name="Allard G."/>
            <person name="Chan C.C.-Y."/>
            <person name="Liu Q.Y."/>
            <person name="Penny S.L."/>
            <person name="Young F."/>
            <person name="Schenk M.E."/>
            <person name="Gaasterland T."/>
            <person name="Doolittle W.F."/>
            <person name="Ragan M.A."/>
            <person name="Charlebois R.L."/>
        </authorList>
    </citation>
    <scope>NUCLEOTIDE SEQUENCE [GENOMIC DNA]</scope>
    <source>
        <strain>ATCC 35092 / DSM 1617 / JCM 11322 / P2</strain>
    </source>
</reference>
<reference key="2">
    <citation type="journal article" date="2001" name="Proc. Natl. Acad. Sci. U.S.A.">
        <title>The complete genome of the crenarchaeon Sulfolobus solfataricus P2.</title>
        <authorList>
            <person name="She Q."/>
            <person name="Singh R.K."/>
            <person name="Confalonieri F."/>
            <person name="Zivanovic Y."/>
            <person name="Allard G."/>
            <person name="Awayez M.J."/>
            <person name="Chan-Weiher C.C.-Y."/>
            <person name="Clausen I.G."/>
            <person name="Curtis B.A."/>
            <person name="De Moors A."/>
            <person name="Erauso G."/>
            <person name="Fletcher C."/>
            <person name="Gordon P.M.K."/>
            <person name="Heikamp-de Jong I."/>
            <person name="Jeffries A.C."/>
            <person name="Kozera C.J."/>
            <person name="Medina N."/>
            <person name="Peng X."/>
            <person name="Thi-Ngoc H.P."/>
            <person name="Redder P."/>
            <person name="Schenk M.E."/>
            <person name="Theriault C."/>
            <person name="Tolstrup N."/>
            <person name="Charlebois R.L."/>
            <person name="Doolittle W.F."/>
            <person name="Duguet M."/>
            <person name="Gaasterland T."/>
            <person name="Garrett R.A."/>
            <person name="Ragan M.A."/>
            <person name="Sensen C.W."/>
            <person name="Van der Oost J."/>
        </authorList>
    </citation>
    <scope>NUCLEOTIDE SEQUENCE [LARGE SCALE GENOMIC DNA]</scope>
    <source>
        <strain>ATCC 35092 / DSM 1617 / JCM 11322 / P2</strain>
    </source>
</reference>
<gene>
    <name evidence="1" type="primary">rpl13</name>
    <name evidence="1" type="synonym">rpl13Ab</name>
    <name type="ordered locus">SSO0069</name>
    <name type="ORF">C05002</name>
    <name type="ORF">C05_041</name>
</gene>
<sequence length="149" mass="16855">MSTQVQEQVVIINAEGQILGRMASNVVRLLKEGKKVIIVNGEKAVISGEKNRVIESYKLLLTVKTLFNPYRNGIRRPRSPINIVKRTIRGMLPKSSKGRRMLKNVKIYVGVPKEFEGRQFIKFPDSDVSRLKGKYVTVEVVSKELGWSG</sequence>
<evidence type="ECO:0000255" key="1">
    <source>
        <dbReference type="HAMAP-Rule" id="MF_01366"/>
    </source>
</evidence>
<evidence type="ECO:0000305" key="2"/>